<organism>
    <name type="scientific">Yersinia pestis bv. Antiqua (strain Nepal516)</name>
    <dbReference type="NCBI Taxonomy" id="377628"/>
    <lineage>
        <taxon>Bacteria</taxon>
        <taxon>Pseudomonadati</taxon>
        <taxon>Pseudomonadota</taxon>
        <taxon>Gammaproteobacteria</taxon>
        <taxon>Enterobacterales</taxon>
        <taxon>Yersiniaceae</taxon>
        <taxon>Yersinia</taxon>
    </lineage>
</organism>
<comment type="function">
    <text evidence="1">With CysN forms the ATP sulfurylase (ATPS) that catalyzes the adenylation of sulfate producing adenosine 5'-phosphosulfate (APS) and diphosphate, the first enzymatic step in sulfur assimilation pathway. APS synthesis involves the formation of a high-energy phosphoric-sulfuric acid anhydride bond driven by GTP hydrolysis by CysN coupled to ATP hydrolysis by CysD.</text>
</comment>
<comment type="catalytic activity">
    <reaction evidence="1">
        <text>sulfate + ATP + H(+) = adenosine 5'-phosphosulfate + diphosphate</text>
        <dbReference type="Rhea" id="RHEA:18133"/>
        <dbReference type="ChEBI" id="CHEBI:15378"/>
        <dbReference type="ChEBI" id="CHEBI:16189"/>
        <dbReference type="ChEBI" id="CHEBI:30616"/>
        <dbReference type="ChEBI" id="CHEBI:33019"/>
        <dbReference type="ChEBI" id="CHEBI:58243"/>
        <dbReference type="EC" id="2.7.7.4"/>
    </reaction>
</comment>
<comment type="pathway">
    <text evidence="1">Sulfur metabolism; hydrogen sulfide biosynthesis; sulfite from sulfate: step 1/3.</text>
</comment>
<comment type="subunit">
    <text evidence="1">Heterodimer composed of CysD, the smaller subunit, and CysN.</text>
</comment>
<comment type="similarity">
    <text evidence="1">Belongs to the PAPS reductase family. CysD subfamily.</text>
</comment>
<dbReference type="EC" id="2.7.7.4" evidence="1"/>
<dbReference type="EMBL" id="CP000305">
    <property type="protein sequence ID" value="ABG17059.1"/>
    <property type="molecule type" value="Genomic_DNA"/>
</dbReference>
<dbReference type="EMBL" id="ACNQ01000007">
    <property type="protein sequence ID" value="EEO77923.1"/>
    <property type="molecule type" value="Genomic_DNA"/>
</dbReference>
<dbReference type="RefSeq" id="WP_002209386.1">
    <property type="nucleotide sequence ID" value="NZ_ACNQ01000007.1"/>
</dbReference>
<dbReference type="SMR" id="Q1CLS1"/>
<dbReference type="GeneID" id="57975343"/>
<dbReference type="KEGG" id="ypn:YPN_0727"/>
<dbReference type="HOGENOM" id="CLU_043026_0_0_6"/>
<dbReference type="UniPathway" id="UPA00140">
    <property type="reaction ID" value="UER00204"/>
</dbReference>
<dbReference type="Proteomes" id="UP000008936">
    <property type="component" value="Chromosome"/>
</dbReference>
<dbReference type="GO" id="GO:0005524">
    <property type="term" value="F:ATP binding"/>
    <property type="evidence" value="ECO:0007669"/>
    <property type="project" value="UniProtKB-KW"/>
</dbReference>
<dbReference type="GO" id="GO:0004781">
    <property type="term" value="F:sulfate adenylyltransferase (ATP) activity"/>
    <property type="evidence" value="ECO:0007669"/>
    <property type="project" value="UniProtKB-UniRule"/>
</dbReference>
<dbReference type="GO" id="GO:0070814">
    <property type="term" value="P:hydrogen sulfide biosynthetic process"/>
    <property type="evidence" value="ECO:0007669"/>
    <property type="project" value="UniProtKB-UniRule"/>
</dbReference>
<dbReference type="GO" id="GO:0000103">
    <property type="term" value="P:sulfate assimilation"/>
    <property type="evidence" value="ECO:0007669"/>
    <property type="project" value="UniProtKB-UniRule"/>
</dbReference>
<dbReference type="CDD" id="cd23946">
    <property type="entry name" value="Sulfate_adenylyltransferase_2"/>
    <property type="match status" value="1"/>
</dbReference>
<dbReference type="FunFam" id="3.40.50.620:FF:000002">
    <property type="entry name" value="Sulfate adenylyltransferase subunit 2"/>
    <property type="match status" value="1"/>
</dbReference>
<dbReference type="Gene3D" id="3.40.50.620">
    <property type="entry name" value="HUPs"/>
    <property type="match status" value="1"/>
</dbReference>
<dbReference type="HAMAP" id="MF_00064">
    <property type="entry name" value="Sulf_adenylyltr_sub2"/>
    <property type="match status" value="1"/>
</dbReference>
<dbReference type="InterPro" id="IPR002500">
    <property type="entry name" value="PAPS_reduct_dom"/>
</dbReference>
<dbReference type="InterPro" id="IPR014729">
    <property type="entry name" value="Rossmann-like_a/b/a_fold"/>
</dbReference>
<dbReference type="InterPro" id="IPR011784">
    <property type="entry name" value="SO4_adenylTrfase_ssu"/>
</dbReference>
<dbReference type="InterPro" id="IPR050128">
    <property type="entry name" value="Sulfate_adenylyltrnsfr_sub2"/>
</dbReference>
<dbReference type="NCBIfam" id="TIGR02039">
    <property type="entry name" value="CysD"/>
    <property type="match status" value="1"/>
</dbReference>
<dbReference type="NCBIfam" id="NF003587">
    <property type="entry name" value="PRK05253.1"/>
    <property type="match status" value="1"/>
</dbReference>
<dbReference type="NCBIfam" id="NF009214">
    <property type="entry name" value="PRK12563.1"/>
    <property type="match status" value="1"/>
</dbReference>
<dbReference type="PANTHER" id="PTHR43196">
    <property type="entry name" value="SULFATE ADENYLYLTRANSFERASE SUBUNIT 2"/>
    <property type="match status" value="1"/>
</dbReference>
<dbReference type="PANTHER" id="PTHR43196:SF1">
    <property type="entry name" value="SULFATE ADENYLYLTRANSFERASE SUBUNIT 2"/>
    <property type="match status" value="1"/>
</dbReference>
<dbReference type="Pfam" id="PF01507">
    <property type="entry name" value="PAPS_reduct"/>
    <property type="match status" value="1"/>
</dbReference>
<dbReference type="PIRSF" id="PIRSF002936">
    <property type="entry name" value="CysDAde_trans"/>
    <property type="match status" value="1"/>
</dbReference>
<dbReference type="SUPFAM" id="SSF52402">
    <property type="entry name" value="Adenine nucleotide alpha hydrolases-like"/>
    <property type="match status" value="1"/>
</dbReference>
<evidence type="ECO:0000255" key="1">
    <source>
        <dbReference type="HAMAP-Rule" id="MF_00064"/>
    </source>
</evidence>
<feature type="chain" id="PRO_1000009002" description="Sulfate adenylyltransferase subunit 2">
    <location>
        <begin position="1"/>
        <end position="302"/>
    </location>
</feature>
<accession>Q1CLS1</accession>
<accession>C4GPR7</accession>
<proteinExistence type="inferred from homology"/>
<keyword id="KW-0067">ATP-binding</keyword>
<keyword id="KW-0547">Nucleotide-binding</keyword>
<keyword id="KW-0548">Nucleotidyltransferase</keyword>
<keyword id="KW-0808">Transferase</keyword>
<reference key="1">
    <citation type="journal article" date="2006" name="J. Bacteriol.">
        <title>Complete genome sequence of Yersinia pestis strains Antiqua and Nepal516: evidence of gene reduction in an emerging pathogen.</title>
        <authorList>
            <person name="Chain P.S.G."/>
            <person name="Hu P."/>
            <person name="Malfatti S.A."/>
            <person name="Radnedge L."/>
            <person name="Larimer F."/>
            <person name="Vergez L.M."/>
            <person name="Worsham P."/>
            <person name="Chu M.C."/>
            <person name="Andersen G.L."/>
        </authorList>
    </citation>
    <scope>NUCLEOTIDE SEQUENCE [LARGE SCALE GENOMIC DNA]</scope>
    <source>
        <strain>Nepal516</strain>
    </source>
</reference>
<reference key="2">
    <citation type="submission" date="2009-04" db="EMBL/GenBank/DDBJ databases">
        <title>Yersinia pestis Nepal516A whole genome shotgun sequencing project.</title>
        <authorList>
            <person name="Plunkett G. III"/>
            <person name="Anderson B.D."/>
            <person name="Baumler D.J."/>
            <person name="Burland V."/>
            <person name="Cabot E.L."/>
            <person name="Glasner J.D."/>
            <person name="Mau B."/>
            <person name="Neeno-Eckwall E."/>
            <person name="Perna N.T."/>
            <person name="Munk A.C."/>
            <person name="Tapia R."/>
            <person name="Green L.D."/>
            <person name="Rogers Y.C."/>
            <person name="Detter J.C."/>
            <person name="Bruce D.C."/>
            <person name="Brettin T.S."/>
        </authorList>
    </citation>
    <scope>NUCLEOTIDE SEQUENCE [LARGE SCALE GENOMIC DNA]</scope>
    <source>
        <strain>Nepal516</strain>
    </source>
</reference>
<name>CYSD_YERPN</name>
<sequence length="302" mass="35187">MDEKRLTHLRQLEAESIHIIREVAAEFGNPVMLYSIGKDSSVMLHLARKAFFPGHLPFPLLHVDTGWKFREMYEFRDHTVKEFGCELLVHRNPEGVAMGINPFVHGSAKHTDIMKTEGLKQALNKYGFDAAFGGARRDEEKSRAKERIYSFRDRFHRWDPKNQRPELWHNYNGQINKGESIRVFPLSNWTELDIWQYIFLEKIEIVPLYLAKPRPVVERDGMLLMVDDDRIDLQPGEVIVQKKVRFRTLGCWPLTGAVESEAETLPAIIEEMLISTTSERQGRMIDRDQSGSMELKKRQGYF</sequence>
<protein>
    <recommendedName>
        <fullName evidence="1">Sulfate adenylyltransferase subunit 2</fullName>
        <ecNumber evidence="1">2.7.7.4</ecNumber>
    </recommendedName>
    <alternativeName>
        <fullName evidence="1">ATP-sulfurylase small subunit</fullName>
    </alternativeName>
    <alternativeName>
        <fullName evidence="1">Sulfate adenylate transferase</fullName>
        <shortName evidence="1">SAT</shortName>
    </alternativeName>
</protein>
<gene>
    <name evidence="1" type="primary">cysD</name>
    <name type="ordered locus">YPN_0727</name>
    <name type="ORF">YP516_0775</name>
</gene>